<accession>Q7XT42</accession>
<accession>B7EFB9</accession>
<accession>Q7X903</accession>
<name>SPL7_ORYSJ</name>
<gene>
    <name type="primary">SPL7</name>
    <name type="ordered locus">Os04g0551500</name>
    <name type="ordered locus">LOC_Os04g46580</name>
    <name type="ORF">OSJNBa0010H02.3</name>
    <name type="ORF">OSJNBb0034G17.20</name>
</gene>
<protein>
    <recommendedName>
        <fullName>Squamosa promoter-binding-like protein 7</fullName>
    </recommendedName>
</protein>
<organism>
    <name type="scientific">Oryza sativa subsp. japonica</name>
    <name type="common">Rice</name>
    <dbReference type="NCBI Taxonomy" id="39947"/>
    <lineage>
        <taxon>Eukaryota</taxon>
        <taxon>Viridiplantae</taxon>
        <taxon>Streptophyta</taxon>
        <taxon>Embryophyta</taxon>
        <taxon>Tracheophyta</taxon>
        <taxon>Spermatophyta</taxon>
        <taxon>Magnoliopsida</taxon>
        <taxon>Liliopsida</taxon>
        <taxon>Poales</taxon>
        <taxon>Poaceae</taxon>
        <taxon>BOP clade</taxon>
        <taxon>Oryzoideae</taxon>
        <taxon>Oryzeae</taxon>
        <taxon>Oryzinae</taxon>
        <taxon>Oryza</taxon>
        <taxon>Oryza sativa</taxon>
    </lineage>
</organism>
<reference key="1">
    <citation type="journal article" date="2002" name="Nature">
        <title>Sequence and analysis of rice chromosome 4.</title>
        <authorList>
            <person name="Feng Q."/>
            <person name="Zhang Y."/>
            <person name="Hao P."/>
            <person name="Wang S."/>
            <person name="Fu G."/>
            <person name="Huang Y."/>
            <person name="Li Y."/>
            <person name="Zhu J."/>
            <person name="Liu Y."/>
            <person name="Hu X."/>
            <person name="Jia P."/>
            <person name="Zhang Y."/>
            <person name="Zhao Q."/>
            <person name="Ying K."/>
            <person name="Yu S."/>
            <person name="Tang Y."/>
            <person name="Weng Q."/>
            <person name="Zhang L."/>
            <person name="Lu Y."/>
            <person name="Mu J."/>
            <person name="Lu Y."/>
            <person name="Zhang L.S."/>
            <person name="Yu Z."/>
            <person name="Fan D."/>
            <person name="Liu X."/>
            <person name="Lu T."/>
            <person name="Li C."/>
            <person name="Wu Y."/>
            <person name="Sun T."/>
            <person name="Lei H."/>
            <person name="Li T."/>
            <person name="Hu H."/>
            <person name="Guan J."/>
            <person name="Wu M."/>
            <person name="Zhang R."/>
            <person name="Zhou B."/>
            <person name="Chen Z."/>
            <person name="Chen L."/>
            <person name="Jin Z."/>
            <person name="Wang R."/>
            <person name="Yin H."/>
            <person name="Cai Z."/>
            <person name="Ren S."/>
            <person name="Lv G."/>
            <person name="Gu W."/>
            <person name="Zhu G."/>
            <person name="Tu Y."/>
            <person name="Jia J."/>
            <person name="Zhang Y."/>
            <person name="Chen J."/>
            <person name="Kang H."/>
            <person name="Chen X."/>
            <person name="Shao C."/>
            <person name="Sun Y."/>
            <person name="Hu Q."/>
            <person name="Zhang X."/>
            <person name="Zhang W."/>
            <person name="Wang L."/>
            <person name="Ding C."/>
            <person name="Sheng H."/>
            <person name="Gu J."/>
            <person name="Chen S."/>
            <person name="Ni L."/>
            <person name="Zhu F."/>
            <person name="Chen W."/>
            <person name="Lan L."/>
            <person name="Lai Y."/>
            <person name="Cheng Z."/>
            <person name="Gu M."/>
            <person name="Jiang J."/>
            <person name="Li J."/>
            <person name="Hong G."/>
            <person name="Xue Y."/>
            <person name="Han B."/>
        </authorList>
    </citation>
    <scope>NUCLEOTIDE SEQUENCE [LARGE SCALE GENOMIC DNA]</scope>
    <source>
        <strain>cv. Nipponbare</strain>
    </source>
</reference>
<reference key="2">
    <citation type="journal article" date="2005" name="Nature">
        <title>The map-based sequence of the rice genome.</title>
        <authorList>
            <consortium name="International rice genome sequencing project (IRGSP)"/>
        </authorList>
    </citation>
    <scope>NUCLEOTIDE SEQUENCE [LARGE SCALE GENOMIC DNA]</scope>
    <source>
        <strain>cv. Nipponbare</strain>
    </source>
</reference>
<reference key="3">
    <citation type="journal article" date="2008" name="Nucleic Acids Res.">
        <title>The rice annotation project database (RAP-DB): 2008 update.</title>
        <authorList>
            <consortium name="The rice annotation project (RAP)"/>
        </authorList>
    </citation>
    <scope>GENOME REANNOTATION</scope>
    <source>
        <strain>cv. Nipponbare</strain>
    </source>
</reference>
<reference key="4">
    <citation type="journal article" date="2013" name="Rice">
        <title>Improvement of the Oryza sativa Nipponbare reference genome using next generation sequence and optical map data.</title>
        <authorList>
            <person name="Kawahara Y."/>
            <person name="de la Bastide M."/>
            <person name="Hamilton J.P."/>
            <person name="Kanamori H."/>
            <person name="McCombie W.R."/>
            <person name="Ouyang S."/>
            <person name="Schwartz D.C."/>
            <person name="Tanaka T."/>
            <person name="Wu J."/>
            <person name="Zhou S."/>
            <person name="Childs K.L."/>
            <person name="Davidson R.M."/>
            <person name="Lin H."/>
            <person name="Quesada-Ocampo L."/>
            <person name="Vaillancourt B."/>
            <person name="Sakai H."/>
            <person name="Lee S.S."/>
            <person name="Kim J."/>
            <person name="Numa H."/>
            <person name="Itoh T."/>
            <person name="Buell C.R."/>
            <person name="Matsumoto T."/>
        </authorList>
    </citation>
    <scope>GENOME REANNOTATION</scope>
    <source>
        <strain>cv. Nipponbare</strain>
    </source>
</reference>
<reference key="5">
    <citation type="journal article" date="2003" name="Science">
        <title>Collection, mapping, and annotation of over 28,000 cDNA clones from japonica rice.</title>
        <authorList>
            <consortium name="The rice full-length cDNA consortium"/>
        </authorList>
    </citation>
    <scope>NUCLEOTIDE SEQUENCE [LARGE SCALE MRNA]</scope>
    <source>
        <strain>cv. Nipponbare</strain>
    </source>
</reference>
<reference key="6">
    <citation type="journal article" date="2006" name="Plant Physiol.">
        <title>Genomic organization, differential expression, and interaction of SQUAMOSA promoter-binding-like transcription factors and microRNA156 in rice.</title>
        <authorList>
            <person name="Xie K."/>
            <person name="Wu C."/>
            <person name="Xiong L."/>
        </authorList>
    </citation>
    <scope>TISSUE SPECIFICITY</scope>
    <scope>GENE FAMILY</scope>
    <scope>NOMENCLATURE</scope>
</reference>
<reference key="7">
    <citation type="journal article" date="2008" name="Gene">
        <title>Comparative study of SBP-box gene family in Arabidopsis and rice.</title>
        <authorList>
            <person name="Yang Z."/>
            <person name="Wang X."/>
            <person name="Gu S."/>
            <person name="Hu Z."/>
            <person name="Xu H."/>
            <person name="Xu C."/>
        </authorList>
    </citation>
    <scope>GENE FAMILY</scope>
</reference>
<comment type="function">
    <text evidence="1">Trans-acting factor that binds specifically to the consensus nucleotide sequence 5'-TNCGTACAA-3' (By similarity). May be involved in panicle development.</text>
</comment>
<comment type="subcellular location">
    <subcellularLocation>
        <location evidence="6">Nucleus</location>
    </subcellularLocation>
</comment>
<comment type="tissue specificity">
    <text evidence="5">Expressed in young panicles.</text>
</comment>
<comment type="domain">
    <text evidence="1">The SBP-type zinc finger is required for the binding to DNA.</text>
</comment>
<proteinExistence type="evidence at transcript level"/>
<feature type="chain" id="PRO_0000308230" description="Squamosa promoter-binding-like protein 7">
    <location>
        <begin position="1"/>
        <end position="360"/>
    </location>
</feature>
<feature type="zinc finger region" description="SBP-type" evidence="3">
    <location>
        <begin position="105"/>
        <end position="182"/>
    </location>
</feature>
<feature type="region of interest" description="Disordered" evidence="4">
    <location>
        <begin position="74"/>
        <end position="98"/>
    </location>
</feature>
<feature type="region of interest" description="Disordered" evidence="4">
    <location>
        <begin position="172"/>
        <end position="196"/>
    </location>
</feature>
<feature type="region of interest" description="Disordered" evidence="4">
    <location>
        <begin position="261"/>
        <end position="306"/>
    </location>
</feature>
<feature type="region of interest" description="Disordered" evidence="4">
    <location>
        <begin position="318"/>
        <end position="360"/>
    </location>
</feature>
<feature type="short sequence motif" description="Bipartite nuclear localization signal" evidence="2">
    <location>
        <begin position="165"/>
        <end position="181"/>
    </location>
</feature>
<feature type="compositionally biased region" description="Gly residues" evidence="4">
    <location>
        <begin position="74"/>
        <end position="89"/>
    </location>
</feature>
<feature type="compositionally biased region" description="Basic residues" evidence="4">
    <location>
        <begin position="172"/>
        <end position="182"/>
    </location>
</feature>
<feature type="binding site" evidence="3">
    <location>
        <position position="108"/>
    </location>
    <ligand>
        <name>Zn(2+)</name>
        <dbReference type="ChEBI" id="CHEBI:29105"/>
        <label>1</label>
    </ligand>
</feature>
<feature type="binding site" evidence="3">
    <location>
        <position position="113"/>
    </location>
    <ligand>
        <name>Zn(2+)</name>
        <dbReference type="ChEBI" id="CHEBI:29105"/>
        <label>1</label>
    </ligand>
</feature>
<feature type="binding site" evidence="3">
    <location>
        <position position="130"/>
    </location>
    <ligand>
        <name>Zn(2+)</name>
        <dbReference type="ChEBI" id="CHEBI:29105"/>
        <label>1</label>
    </ligand>
</feature>
<feature type="binding site" evidence="3">
    <location>
        <position position="133"/>
    </location>
    <ligand>
        <name>Zn(2+)</name>
        <dbReference type="ChEBI" id="CHEBI:29105"/>
        <label>1</label>
    </ligand>
</feature>
<feature type="binding site" evidence="3">
    <location>
        <position position="149"/>
    </location>
    <ligand>
        <name>Zn(2+)</name>
        <dbReference type="ChEBI" id="CHEBI:29105"/>
        <label>2</label>
    </ligand>
</feature>
<feature type="binding site" evidence="3">
    <location>
        <position position="152"/>
    </location>
    <ligand>
        <name>Zn(2+)</name>
        <dbReference type="ChEBI" id="CHEBI:29105"/>
        <label>2</label>
    </ligand>
</feature>
<feature type="binding site" evidence="3">
    <location>
        <position position="156"/>
    </location>
    <ligand>
        <name>Zn(2+)</name>
        <dbReference type="ChEBI" id="CHEBI:29105"/>
        <label>2</label>
    </ligand>
</feature>
<feature type="binding site" evidence="3">
    <location>
        <position position="168"/>
    </location>
    <ligand>
        <name>Zn(2+)</name>
        <dbReference type="ChEBI" id="CHEBI:29105"/>
        <label>2</label>
    </ligand>
</feature>
<evidence type="ECO:0000250" key="1"/>
<evidence type="ECO:0000255" key="2"/>
<evidence type="ECO:0000255" key="3">
    <source>
        <dbReference type="PROSITE-ProRule" id="PRU00470"/>
    </source>
</evidence>
<evidence type="ECO:0000256" key="4">
    <source>
        <dbReference type="SAM" id="MobiDB-lite"/>
    </source>
</evidence>
<evidence type="ECO:0000269" key="5">
    <source>
    </source>
</evidence>
<evidence type="ECO:0000305" key="6"/>
<sequence>MEGNGCGGSGATPRGVVGMHWAPVVTSPPSPQPPFLPPAPCRPDVQMQQQGGLTCLKLGKRPCFWGGDGAGQVAQGSGGGGGGGGGGSADQGKRKEKAATAVPVVPRCQVEGCDITLQGVKEYHRRHKVCEVHAKAPRVVVHGTEQRFCQQCSRFHVLAEFDDAKKSCRRRLAGHNERRRRSNASEAMARGSAHPHGMPVLGHGFPPYGLPTSSAGALSLLSSARATGPWLMPTPDISARSSAALDELIAENRAALLSWQFFSDRQPPPAGRPTGRSPGSETAGGWHAHLQARPPPPGAGGQHENQSGHVTLDLMQATTAAGGSGAPFRPVPARPPKEGGDAGCTSDAWTPSPMEGARVV</sequence>
<dbReference type="EMBL" id="AL606633">
    <property type="protein sequence ID" value="CAE01683.2"/>
    <property type="molecule type" value="Genomic_DNA"/>
</dbReference>
<dbReference type="EMBL" id="AL663000">
    <property type="protein sequence ID" value="CAD41588.1"/>
    <property type="molecule type" value="Genomic_DNA"/>
</dbReference>
<dbReference type="EMBL" id="AP008210">
    <property type="protein sequence ID" value="BAF15411.1"/>
    <property type="molecule type" value="Genomic_DNA"/>
</dbReference>
<dbReference type="EMBL" id="AP014960">
    <property type="protein sequence ID" value="BAS90384.1"/>
    <property type="molecule type" value="Genomic_DNA"/>
</dbReference>
<dbReference type="EMBL" id="AK068749">
    <property type="protein sequence ID" value="BAG91066.1"/>
    <property type="molecule type" value="mRNA"/>
</dbReference>
<dbReference type="RefSeq" id="XP_015635344.1">
    <property type="nucleotide sequence ID" value="XM_015779858.1"/>
</dbReference>
<dbReference type="SMR" id="Q7XT42"/>
<dbReference type="FunCoup" id="Q7XT42">
    <property type="interactions" value="2"/>
</dbReference>
<dbReference type="STRING" id="39947.Q7XT42"/>
<dbReference type="PaxDb" id="39947-Q7XT42"/>
<dbReference type="EnsemblPlants" id="Os04t0551500-01">
    <property type="protein sequence ID" value="Os04t0551500-01"/>
    <property type="gene ID" value="Os04g0551500"/>
</dbReference>
<dbReference type="Gramene" id="Os04t0551500-01">
    <property type="protein sequence ID" value="Os04t0551500-01"/>
    <property type="gene ID" value="Os04g0551500"/>
</dbReference>
<dbReference type="KEGG" id="dosa:Os04g0551500"/>
<dbReference type="eggNOG" id="ENOG502QQMA">
    <property type="taxonomic scope" value="Eukaryota"/>
</dbReference>
<dbReference type="HOGENOM" id="CLU_065896_1_0_1"/>
<dbReference type="InParanoid" id="Q7XT42"/>
<dbReference type="OMA" id="GVKEYHR"/>
<dbReference type="OrthoDB" id="514967at2759"/>
<dbReference type="Proteomes" id="UP000000763">
    <property type="component" value="Chromosome 4"/>
</dbReference>
<dbReference type="Proteomes" id="UP000059680">
    <property type="component" value="Chromosome 4"/>
</dbReference>
<dbReference type="GO" id="GO:0005634">
    <property type="term" value="C:nucleus"/>
    <property type="evidence" value="ECO:0007669"/>
    <property type="project" value="UniProtKB-SubCell"/>
</dbReference>
<dbReference type="GO" id="GO:0003677">
    <property type="term" value="F:DNA binding"/>
    <property type="evidence" value="ECO:0007669"/>
    <property type="project" value="UniProtKB-KW"/>
</dbReference>
<dbReference type="GO" id="GO:0008270">
    <property type="term" value="F:zinc ion binding"/>
    <property type="evidence" value="ECO:0007669"/>
    <property type="project" value="UniProtKB-KW"/>
</dbReference>
<dbReference type="FunFam" id="4.10.1100.10:FF:000001">
    <property type="entry name" value="Squamosa promoter-binding-like protein 14"/>
    <property type="match status" value="1"/>
</dbReference>
<dbReference type="Gene3D" id="4.10.1100.10">
    <property type="entry name" value="Transcription factor, SBP-box domain"/>
    <property type="match status" value="1"/>
</dbReference>
<dbReference type="InterPro" id="IPR044817">
    <property type="entry name" value="SBP-like"/>
</dbReference>
<dbReference type="InterPro" id="IPR004333">
    <property type="entry name" value="SBP_dom"/>
</dbReference>
<dbReference type="InterPro" id="IPR036893">
    <property type="entry name" value="SBP_sf"/>
</dbReference>
<dbReference type="PANTHER" id="PTHR31251">
    <property type="entry name" value="SQUAMOSA PROMOTER-BINDING-LIKE PROTEIN 4"/>
    <property type="match status" value="1"/>
</dbReference>
<dbReference type="PANTHER" id="PTHR31251:SF222">
    <property type="entry name" value="SQUAMOSA PROMOTER-BINDING-LIKE PROTEIN 7"/>
    <property type="match status" value="1"/>
</dbReference>
<dbReference type="Pfam" id="PF03110">
    <property type="entry name" value="SBP"/>
    <property type="match status" value="1"/>
</dbReference>
<dbReference type="SUPFAM" id="SSF103612">
    <property type="entry name" value="SBT domain"/>
    <property type="match status" value="1"/>
</dbReference>
<dbReference type="PROSITE" id="PS51141">
    <property type="entry name" value="ZF_SBP"/>
    <property type="match status" value="1"/>
</dbReference>
<keyword id="KW-0238">DNA-binding</keyword>
<keyword id="KW-0479">Metal-binding</keyword>
<keyword id="KW-0539">Nucleus</keyword>
<keyword id="KW-1185">Reference proteome</keyword>
<keyword id="KW-0804">Transcription</keyword>
<keyword id="KW-0805">Transcription regulation</keyword>
<keyword id="KW-0862">Zinc</keyword>
<keyword id="KW-0863">Zinc-finger</keyword>